<gene>
    <name type="ORF">A2R</name>
</gene>
<proteinExistence type="inferred from homology"/>
<evidence type="ECO:0000250" key="1"/>
<evidence type="ECO:0000255" key="2"/>
<evidence type="ECO:0000305" key="3"/>
<accession>P52585</accession>
<dbReference type="EMBL" id="S67522">
    <property type="protein sequence ID" value="AAB29223.1"/>
    <property type="molecule type" value="Genomic_DNA"/>
</dbReference>
<dbReference type="PIR" id="D49530">
    <property type="entry name" value="D49530"/>
</dbReference>
<dbReference type="SMR" id="P52585"/>
<dbReference type="GO" id="GO:0005615">
    <property type="term" value="C:extracellular space"/>
    <property type="evidence" value="ECO:0007669"/>
    <property type="project" value="TreeGrafter"/>
</dbReference>
<dbReference type="GO" id="GO:0016020">
    <property type="term" value="C:membrane"/>
    <property type="evidence" value="ECO:0007669"/>
    <property type="project" value="InterPro"/>
</dbReference>
<dbReference type="GO" id="GO:0042056">
    <property type="term" value="F:chemoattractant activity"/>
    <property type="evidence" value="ECO:0007669"/>
    <property type="project" value="TreeGrafter"/>
</dbReference>
<dbReference type="GO" id="GO:0008083">
    <property type="term" value="F:growth factor activity"/>
    <property type="evidence" value="ECO:0007669"/>
    <property type="project" value="UniProtKB-KW"/>
</dbReference>
<dbReference type="GO" id="GO:0005172">
    <property type="term" value="F:vascular endothelial growth factor receptor binding"/>
    <property type="evidence" value="ECO:0007669"/>
    <property type="project" value="TreeGrafter"/>
</dbReference>
<dbReference type="GO" id="GO:0050930">
    <property type="term" value="P:induction of positive chemotaxis"/>
    <property type="evidence" value="ECO:0007669"/>
    <property type="project" value="TreeGrafter"/>
</dbReference>
<dbReference type="GO" id="GO:0045766">
    <property type="term" value="P:positive regulation of angiogenesis"/>
    <property type="evidence" value="ECO:0007669"/>
    <property type="project" value="TreeGrafter"/>
</dbReference>
<dbReference type="GO" id="GO:0051781">
    <property type="term" value="P:positive regulation of cell division"/>
    <property type="evidence" value="ECO:0007669"/>
    <property type="project" value="UniProtKB-KW"/>
</dbReference>
<dbReference type="GO" id="GO:0001938">
    <property type="term" value="P:positive regulation of endothelial cell proliferation"/>
    <property type="evidence" value="ECO:0007669"/>
    <property type="project" value="TreeGrafter"/>
</dbReference>
<dbReference type="GO" id="GO:0060754">
    <property type="term" value="P:positive regulation of mast cell chemotaxis"/>
    <property type="evidence" value="ECO:0007669"/>
    <property type="project" value="TreeGrafter"/>
</dbReference>
<dbReference type="GO" id="GO:0001666">
    <property type="term" value="P:response to hypoxia"/>
    <property type="evidence" value="ECO:0007669"/>
    <property type="project" value="TreeGrafter"/>
</dbReference>
<dbReference type="CDD" id="cd00135">
    <property type="entry name" value="PDGF"/>
    <property type="match status" value="1"/>
</dbReference>
<dbReference type="Gene3D" id="2.10.90.10">
    <property type="entry name" value="Cystine-knot cytokines"/>
    <property type="match status" value="1"/>
</dbReference>
<dbReference type="InterPro" id="IPR029034">
    <property type="entry name" value="Cystine-knot_cytokine"/>
</dbReference>
<dbReference type="InterPro" id="IPR023581">
    <property type="entry name" value="PD_growth_factor_CS"/>
</dbReference>
<dbReference type="InterPro" id="IPR000072">
    <property type="entry name" value="PDGF/VEGF_dom"/>
</dbReference>
<dbReference type="InterPro" id="IPR050507">
    <property type="entry name" value="PDGF/VEGF_growth_factor"/>
</dbReference>
<dbReference type="PANTHER" id="PTHR12025">
    <property type="entry name" value="VASCULAR ENDOTHELIAL GROWTH FACTOR"/>
    <property type="match status" value="1"/>
</dbReference>
<dbReference type="PANTHER" id="PTHR12025:SF5">
    <property type="entry name" value="VASCULAR ENDOTHELIAL GROWTH FACTOR A, LONG FORM"/>
    <property type="match status" value="1"/>
</dbReference>
<dbReference type="Pfam" id="PF00341">
    <property type="entry name" value="PDGF"/>
    <property type="match status" value="1"/>
</dbReference>
<dbReference type="SMART" id="SM00141">
    <property type="entry name" value="PDGF"/>
    <property type="match status" value="1"/>
</dbReference>
<dbReference type="SUPFAM" id="SSF57501">
    <property type="entry name" value="Cystine-knot cytokines"/>
    <property type="match status" value="1"/>
</dbReference>
<dbReference type="PROSITE" id="PS00249">
    <property type="entry name" value="PDGF_1"/>
    <property type="match status" value="1"/>
</dbReference>
<dbReference type="PROSITE" id="PS50278">
    <property type="entry name" value="PDGF_2"/>
    <property type="match status" value="1"/>
</dbReference>
<sequence length="148" mass="16078">MKLTATLQVVVALLICMYNLPECVSQSNDSPPSTNDWMRTLDKSGCKPRDTVVYLGEEYPESTNLQYNPRCVTVKRCSGCCNGDGQICTAVETRNTTVTVSVTGVSSSSGTNSGVSTNLQRISVTEHTKCDCIGRTTTTPTTTREPRR</sequence>
<feature type="signal peptide" evidence="2">
    <location>
        <begin position="1"/>
        <end position="25"/>
    </location>
</feature>
<feature type="chain" id="PRO_0000023418" description="Vascular endothelial growth factor homolog">
    <location>
        <begin position="26"/>
        <end position="148"/>
    </location>
</feature>
<feature type="glycosylation site" description="N-linked (GlcNAc...) asparagine; by host" evidence="2">
    <location>
        <position position="95"/>
    </location>
</feature>
<feature type="disulfide bond" evidence="1">
    <location>
        <begin position="46"/>
        <end position="88"/>
    </location>
</feature>
<feature type="disulfide bond" description="Interchain" evidence="1">
    <location>
        <position position="71"/>
    </location>
</feature>
<feature type="disulfide bond" evidence="1">
    <location>
        <begin position="77"/>
        <end position="130"/>
    </location>
</feature>
<feature type="disulfide bond" description="Interchain" evidence="1">
    <location>
        <position position="80"/>
    </location>
</feature>
<feature type="disulfide bond" evidence="1">
    <location>
        <begin position="81"/>
        <end position="132"/>
    </location>
</feature>
<keyword id="KW-1015">Disulfide bond</keyword>
<keyword id="KW-0325">Glycoprotein</keyword>
<keyword id="KW-0339">Growth factor</keyword>
<keyword id="KW-0497">Mitogen</keyword>
<keyword id="KW-0964">Secreted</keyword>
<keyword id="KW-0732">Signal</keyword>
<organism>
    <name type="scientific">Orf virus (strain NZ7)</name>
    <name type="common">OV NZ-7</name>
    <dbReference type="NCBI Taxonomy" id="73495"/>
    <lineage>
        <taxon>Viruses</taxon>
        <taxon>Varidnaviria</taxon>
        <taxon>Bamfordvirae</taxon>
        <taxon>Nucleocytoviricota</taxon>
        <taxon>Pokkesviricetes</taxon>
        <taxon>Chitovirales</taxon>
        <taxon>Poxviridae</taxon>
        <taxon>Chordopoxvirinae</taxon>
        <taxon>Parapoxvirus</taxon>
        <taxon>Orf virus</taxon>
    </lineage>
</organism>
<protein>
    <recommendedName>
        <fullName>Vascular endothelial growth factor homolog</fullName>
    </recommendedName>
</protein>
<organismHost>
    <name type="scientific">Capra hircus</name>
    <name type="common">Goat</name>
    <dbReference type="NCBI Taxonomy" id="9925"/>
</organismHost>
<organismHost>
    <name type="scientific">Homo sapiens</name>
    <name type="common">Human</name>
    <dbReference type="NCBI Taxonomy" id="9606"/>
</organismHost>
<organismHost>
    <name type="scientific">Ovis aries</name>
    <name type="common">Sheep</name>
    <dbReference type="NCBI Taxonomy" id="9940"/>
</organismHost>
<comment type="function">
    <text>Induces endothelial proliferation.</text>
</comment>
<comment type="subunit">
    <text evidence="1">Homodimer; disulfide-linked.</text>
</comment>
<comment type="subcellular location">
    <subcellularLocation>
        <location evidence="3">Secreted</location>
    </subcellularLocation>
</comment>
<comment type="similarity">
    <text evidence="3">Belongs to the PDGF/VEGF growth factor family.</text>
</comment>
<reference key="1">
    <citation type="journal article" date="1994" name="J. Virol.">
        <title>Homologs of vascular endothelial growth factor are encoded by the poxvirus orf virus.</title>
        <authorList>
            <person name="Lyttle D.J."/>
            <person name="Fraser K.M."/>
            <person name="Fleming S.B."/>
            <person name="Mercer A.A."/>
            <person name="Robinson A.J."/>
        </authorList>
    </citation>
    <scope>NUCLEOTIDE SEQUENCE [GENOMIC DNA]</scope>
</reference>
<name>VEGFH_ORFN7</name>